<accession>B2TTB0</accession>
<gene>
    <name evidence="1" type="primary">folD</name>
    <name type="ordered locus">SbBS512_E0445</name>
</gene>
<organism>
    <name type="scientific">Shigella boydii serotype 18 (strain CDC 3083-94 / BS512)</name>
    <dbReference type="NCBI Taxonomy" id="344609"/>
    <lineage>
        <taxon>Bacteria</taxon>
        <taxon>Pseudomonadati</taxon>
        <taxon>Pseudomonadota</taxon>
        <taxon>Gammaproteobacteria</taxon>
        <taxon>Enterobacterales</taxon>
        <taxon>Enterobacteriaceae</taxon>
        <taxon>Shigella</taxon>
    </lineage>
</organism>
<keyword id="KW-0028">Amino-acid biosynthesis</keyword>
<keyword id="KW-0368">Histidine biosynthesis</keyword>
<keyword id="KW-0378">Hydrolase</keyword>
<keyword id="KW-0486">Methionine biosynthesis</keyword>
<keyword id="KW-0511">Multifunctional enzyme</keyword>
<keyword id="KW-0521">NADP</keyword>
<keyword id="KW-0554">One-carbon metabolism</keyword>
<keyword id="KW-0560">Oxidoreductase</keyword>
<keyword id="KW-0658">Purine biosynthesis</keyword>
<keyword id="KW-1185">Reference proteome</keyword>
<evidence type="ECO:0000255" key="1">
    <source>
        <dbReference type="HAMAP-Rule" id="MF_01576"/>
    </source>
</evidence>
<dbReference type="EC" id="1.5.1.5" evidence="1"/>
<dbReference type="EC" id="3.5.4.9" evidence="1"/>
<dbReference type="EMBL" id="CP001063">
    <property type="protein sequence ID" value="ACD07032.1"/>
    <property type="molecule type" value="Genomic_DNA"/>
</dbReference>
<dbReference type="RefSeq" id="WP_000729155.1">
    <property type="nucleotide sequence ID" value="NC_010658.1"/>
</dbReference>
<dbReference type="SMR" id="B2TTB0"/>
<dbReference type="STRING" id="344609.SbBS512_E0445"/>
<dbReference type="GeneID" id="93776949"/>
<dbReference type="KEGG" id="sbc:SbBS512_E0445"/>
<dbReference type="HOGENOM" id="CLU_034045_2_1_6"/>
<dbReference type="UniPathway" id="UPA00193"/>
<dbReference type="Proteomes" id="UP000001030">
    <property type="component" value="Chromosome"/>
</dbReference>
<dbReference type="GO" id="GO:0005829">
    <property type="term" value="C:cytosol"/>
    <property type="evidence" value="ECO:0007669"/>
    <property type="project" value="TreeGrafter"/>
</dbReference>
<dbReference type="GO" id="GO:0004477">
    <property type="term" value="F:methenyltetrahydrofolate cyclohydrolase activity"/>
    <property type="evidence" value="ECO:0007669"/>
    <property type="project" value="UniProtKB-UniRule"/>
</dbReference>
<dbReference type="GO" id="GO:0004488">
    <property type="term" value="F:methylenetetrahydrofolate dehydrogenase (NADP+) activity"/>
    <property type="evidence" value="ECO:0007669"/>
    <property type="project" value="UniProtKB-UniRule"/>
</dbReference>
<dbReference type="GO" id="GO:0000105">
    <property type="term" value="P:L-histidine biosynthetic process"/>
    <property type="evidence" value="ECO:0007669"/>
    <property type="project" value="UniProtKB-KW"/>
</dbReference>
<dbReference type="GO" id="GO:0009086">
    <property type="term" value="P:methionine biosynthetic process"/>
    <property type="evidence" value="ECO:0007669"/>
    <property type="project" value="UniProtKB-KW"/>
</dbReference>
<dbReference type="GO" id="GO:0006164">
    <property type="term" value="P:purine nucleotide biosynthetic process"/>
    <property type="evidence" value="ECO:0007669"/>
    <property type="project" value="UniProtKB-KW"/>
</dbReference>
<dbReference type="GO" id="GO:0035999">
    <property type="term" value="P:tetrahydrofolate interconversion"/>
    <property type="evidence" value="ECO:0007669"/>
    <property type="project" value="UniProtKB-UniRule"/>
</dbReference>
<dbReference type="CDD" id="cd01080">
    <property type="entry name" value="NAD_bind_m-THF_DH_Cyclohyd"/>
    <property type="match status" value="1"/>
</dbReference>
<dbReference type="FunFam" id="3.40.50.10860:FF:000001">
    <property type="entry name" value="Bifunctional protein FolD"/>
    <property type="match status" value="1"/>
</dbReference>
<dbReference type="FunFam" id="3.40.50.720:FF:000006">
    <property type="entry name" value="Bifunctional protein FolD"/>
    <property type="match status" value="1"/>
</dbReference>
<dbReference type="Gene3D" id="3.40.50.10860">
    <property type="entry name" value="Leucine Dehydrogenase, chain A, domain 1"/>
    <property type="match status" value="1"/>
</dbReference>
<dbReference type="Gene3D" id="3.40.50.720">
    <property type="entry name" value="NAD(P)-binding Rossmann-like Domain"/>
    <property type="match status" value="1"/>
</dbReference>
<dbReference type="HAMAP" id="MF_01576">
    <property type="entry name" value="THF_DHG_CYH"/>
    <property type="match status" value="1"/>
</dbReference>
<dbReference type="InterPro" id="IPR046346">
    <property type="entry name" value="Aminoacid_DH-like_N_sf"/>
</dbReference>
<dbReference type="InterPro" id="IPR036291">
    <property type="entry name" value="NAD(P)-bd_dom_sf"/>
</dbReference>
<dbReference type="InterPro" id="IPR000672">
    <property type="entry name" value="THF_DH/CycHdrlase"/>
</dbReference>
<dbReference type="InterPro" id="IPR020630">
    <property type="entry name" value="THF_DH/CycHdrlase_cat_dom"/>
</dbReference>
<dbReference type="InterPro" id="IPR020867">
    <property type="entry name" value="THF_DH/CycHdrlase_CS"/>
</dbReference>
<dbReference type="InterPro" id="IPR020631">
    <property type="entry name" value="THF_DH/CycHdrlase_NAD-bd_dom"/>
</dbReference>
<dbReference type="NCBIfam" id="NF008058">
    <property type="entry name" value="PRK10792.1"/>
    <property type="match status" value="1"/>
</dbReference>
<dbReference type="NCBIfam" id="NF010783">
    <property type="entry name" value="PRK14186.1"/>
    <property type="match status" value="1"/>
</dbReference>
<dbReference type="PANTHER" id="PTHR48099:SF5">
    <property type="entry name" value="C-1-TETRAHYDROFOLATE SYNTHASE, CYTOPLASMIC"/>
    <property type="match status" value="1"/>
</dbReference>
<dbReference type="PANTHER" id="PTHR48099">
    <property type="entry name" value="C-1-TETRAHYDROFOLATE SYNTHASE, CYTOPLASMIC-RELATED"/>
    <property type="match status" value="1"/>
</dbReference>
<dbReference type="Pfam" id="PF00763">
    <property type="entry name" value="THF_DHG_CYH"/>
    <property type="match status" value="1"/>
</dbReference>
<dbReference type="Pfam" id="PF02882">
    <property type="entry name" value="THF_DHG_CYH_C"/>
    <property type="match status" value="1"/>
</dbReference>
<dbReference type="PRINTS" id="PR00085">
    <property type="entry name" value="THFDHDRGNASE"/>
</dbReference>
<dbReference type="SUPFAM" id="SSF53223">
    <property type="entry name" value="Aminoacid dehydrogenase-like, N-terminal domain"/>
    <property type="match status" value="1"/>
</dbReference>
<dbReference type="SUPFAM" id="SSF51735">
    <property type="entry name" value="NAD(P)-binding Rossmann-fold domains"/>
    <property type="match status" value="1"/>
</dbReference>
<dbReference type="PROSITE" id="PS00766">
    <property type="entry name" value="THF_DHG_CYH_1"/>
    <property type="match status" value="1"/>
</dbReference>
<dbReference type="PROSITE" id="PS00767">
    <property type="entry name" value="THF_DHG_CYH_2"/>
    <property type="match status" value="1"/>
</dbReference>
<sequence length="288" mass="30956">MAAKIIDGKTIAQQVRSEVAQKVQARIAAGLRAPGLAVVLVGSNPASQIYVASKRKACEEVGFVSRSYDLPETTSEAELLELIDALNADNTIDGILVQLPLPAGIDNVKVLERIHPDKDVDGFHPYNVGRLCQRAPRLRPCTPRGIVTLLERYNIDTFGLNAVVIGASNIVGRPMSMELLLAGCTTTVTHRFTKNLRHHVENADLLIVAVGKPGFIPGDWIKEGAIVIDVGINRLENGKVVGDVVFEDAAKRASYITPVPGGVGPMTVATLIENTLQACVEYHDPQGE</sequence>
<feature type="chain" id="PRO_1000196805" description="Bifunctional protein FolD">
    <location>
        <begin position="1"/>
        <end position="288"/>
    </location>
</feature>
<feature type="binding site" evidence="1">
    <location>
        <begin position="166"/>
        <end position="168"/>
    </location>
    <ligand>
        <name>NADP(+)</name>
        <dbReference type="ChEBI" id="CHEBI:58349"/>
    </ligand>
</feature>
<feature type="binding site" evidence="1">
    <location>
        <position position="232"/>
    </location>
    <ligand>
        <name>NADP(+)</name>
        <dbReference type="ChEBI" id="CHEBI:58349"/>
    </ligand>
</feature>
<protein>
    <recommendedName>
        <fullName evidence="1">Bifunctional protein FolD</fullName>
    </recommendedName>
    <domain>
        <recommendedName>
            <fullName evidence="1">Methylenetetrahydrofolate dehydrogenase</fullName>
            <ecNumber evidence="1">1.5.1.5</ecNumber>
        </recommendedName>
    </domain>
    <domain>
        <recommendedName>
            <fullName evidence="1">Methenyltetrahydrofolate cyclohydrolase</fullName>
            <ecNumber evidence="1">3.5.4.9</ecNumber>
        </recommendedName>
    </domain>
</protein>
<proteinExistence type="inferred from homology"/>
<comment type="function">
    <text evidence="1">Catalyzes the oxidation of 5,10-methylenetetrahydrofolate to 5,10-methenyltetrahydrofolate and then the hydrolysis of 5,10-methenyltetrahydrofolate to 10-formyltetrahydrofolate.</text>
</comment>
<comment type="catalytic activity">
    <reaction evidence="1">
        <text>(6R)-5,10-methylene-5,6,7,8-tetrahydrofolate + NADP(+) = (6R)-5,10-methenyltetrahydrofolate + NADPH</text>
        <dbReference type="Rhea" id="RHEA:22812"/>
        <dbReference type="ChEBI" id="CHEBI:15636"/>
        <dbReference type="ChEBI" id="CHEBI:57455"/>
        <dbReference type="ChEBI" id="CHEBI:57783"/>
        <dbReference type="ChEBI" id="CHEBI:58349"/>
        <dbReference type="EC" id="1.5.1.5"/>
    </reaction>
</comment>
<comment type="catalytic activity">
    <reaction evidence="1">
        <text>(6R)-5,10-methenyltetrahydrofolate + H2O = (6R)-10-formyltetrahydrofolate + H(+)</text>
        <dbReference type="Rhea" id="RHEA:23700"/>
        <dbReference type="ChEBI" id="CHEBI:15377"/>
        <dbReference type="ChEBI" id="CHEBI:15378"/>
        <dbReference type="ChEBI" id="CHEBI:57455"/>
        <dbReference type="ChEBI" id="CHEBI:195366"/>
        <dbReference type="EC" id="3.5.4.9"/>
    </reaction>
</comment>
<comment type="pathway">
    <text evidence="1">One-carbon metabolism; tetrahydrofolate interconversion.</text>
</comment>
<comment type="subunit">
    <text evidence="1">Homodimer.</text>
</comment>
<comment type="similarity">
    <text evidence="1">Belongs to the tetrahydrofolate dehydrogenase/cyclohydrolase family.</text>
</comment>
<name>FOLD_SHIB3</name>
<reference key="1">
    <citation type="submission" date="2008-05" db="EMBL/GenBank/DDBJ databases">
        <title>Complete sequence of Shigella boydii serotype 18 strain BS512.</title>
        <authorList>
            <person name="Rasko D.A."/>
            <person name="Rosovitz M."/>
            <person name="Maurelli A.T."/>
            <person name="Myers G."/>
            <person name="Seshadri R."/>
            <person name="Cer R."/>
            <person name="Jiang L."/>
            <person name="Ravel J."/>
            <person name="Sebastian Y."/>
        </authorList>
    </citation>
    <scope>NUCLEOTIDE SEQUENCE [LARGE SCALE GENOMIC DNA]</scope>
    <source>
        <strain>CDC 3083-94 / BS512</strain>
    </source>
</reference>